<feature type="chain" id="PRO_0000115078" description="DNA mismatch repair protein MutS">
    <location>
        <begin position="1"/>
        <end position="910"/>
    </location>
</feature>
<feature type="region of interest" description="Disordered" evidence="2">
    <location>
        <begin position="1"/>
        <end position="21"/>
    </location>
</feature>
<feature type="compositionally biased region" description="Basic and acidic residues" evidence="2">
    <location>
        <begin position="1"/>
        <end position="11"/>
    </location>
</feature>
<feature type="binding site" evidence="1">
    <location>
        <begin position="658"/>
        <end position="665"/>
    </location>
    <ligand>
        <name>ATP</name>
        <dbReference type="ChEBI" id="CHEBI:30616"/>
    </ligand>
</feature>
<accession>Q8G310</accession>
<accession>G0KBC0</accession>
<proteinExistence type="inferred from homology"/>
<dbReference type="EMBL" id="AE014291">
    <property type="protein sequence ID" value="AAN29100.1"/>
    <property type="molecule type" value="Genomic_DNA"/>
</dbReference>
<dbReference type="EMBL" id="CP002997">
    <property type="protein sequence ID" value="AEM17512.1"/>
    <property type="molecule type" value="Genomic_DNA"/>
</dbReference>
<dbReference type="RefSeq" id="WP_004691341.1">
    <property type="nucleotide sequence ID" value="NZ_KN046804.1"/>
</dbReference>
<dbReference type="SMR" id="Q8G310"/>
<dbReference type="GeneID" id="55589938"/>
<dbReference type="KEGG" id="bms:BR0147"/>
<dbReference type="KEGG" id="bsi:BS1330_I0147"/>
<dbReference type="PATRIC" id="fig|204722.22.peg.1685"/>
<dbReference type="HOGENOM" id="CLU_002472_4_0_5"/>
<dbReference type="PhylomeDB" id="Q8G310"/>
<dbReference type="Proteomes" id="UP000007104">
    <property type="component" value="Chromosome I"/>
</dbReference>
<dbReference type="GO" id="GO:0005829">
    <property type="term" value="C:cytosol"/>
    <property type="evidence" value="ECO:0007669"/>
    <property type="project" value="TreeGrafter"/>
</dbReference>
<dbReference type="GO" id="GO:0005524">
    <property type="term" value="F:ATP binding"/>
    <property type="evidence" value="ECO:0007669"/>
    <property type="project" value="UniProtKB-UniRule"/>
</dbReference>
<dbReference type="GO" id="GO:0140664">
    <property type="term" value="F:ATP-dependent DNA damage sensor activity"/>
    <property type="evidence" value="ECO:0007669"/>
    <property type="project" value="InterPro"/>
</dbReference>
<dbReference type="GO" id="GO:0003684">
    <property type="term" value="F:damaged DNA binding"/>
    <property type="evidence" value="ECO:0007669"/>
    <property type="project" value="UniProtKB-UniRule"/>
</dbReference>
<dbReference type="GO" id="GO:0030983">
    <property type="term" value="F:mismatched DNA binding"/>
    <property type="evidence" value="ECO:0007669"/>
    <property type="project" value="InterPro"/>
</dbReference>
<dbReference type="GO" id="GO:0006298">
    <property type="term" value="P:mismatch repair"/>
    <property type="evidence" value="ECO:0007669"/>
    <property type="project" value="UniProtKB-UniRule"/>
</dbReference>
<dbReference type="CDD" id="cd03284">
    <property type="entry name" value="ABC_MutS1"/>
    <property type="match status" value="1"/>
</dbReference>
<dbReference type="FunFam" id="3.40.1170.10:FF:000001">
    <property type="entry name" value="DNA mismatch repair protein MutS"/>
    <property type="match status" value="1"/>
</dbReference>
<dbReference type="FunFam" id="3.40.50.300:FF:000870">
    <property type="entry name" value="MutS protein homolog 4"/>
    <property type="match status" value="1"/>
</dbReference>
<dbReference type="Gene3D" id="1.10.1420.10">
    <property type="match status" value="2"/>
</dbReference>
<dbReference type="Gene3D" id="6.10.140.430">
    <property type="match status" value="1"/>
</dbReference>
<dbReference type="Gene3D" id="3.40.1170.10">
    <property type="entry name" value="DNA repair protein MutS, domain I"/>
    <property type="match status" value="1"/>
</dbReference>
<dbReference type="Gene3D" id="3.30.420.110">
    <property type="entry name" value="MutS, connector domain"/>
    <property type="match status" value="1"/>
</dbReference>
<dbReference type="Gene3D" id="3.40.50.300">
    <property type="entry name" value="P-loop containing nucleotide triphosphate hydrolases"/>
    <property type="match status" value="1"/>
</dbReference>
<dbReference type="HAMAP" id="MF_00096">
    <property type="entry name" value="MutS"/>
    <property type="match status" value="1"/>
</dbReference>
<dbReference type="InterPro" id="IPR005748">
    <property type="entry name" value="DNA_mismatch_repair_MutS"/>
</dbReference>
<dbReference type="InterPro" id="IPR007695">
    <property type="entry name" value="DNA_mismatch_repair_MutS-lik_N"/>
</dbReference>
<dbReference type="InterPro" id="IPR017261">
    <property type="entry name" value="DNA_mismatch_repair_MutS/MSH"/>
</dbReference>
<dbReference type="InterPro" id="IPR000432">
    <property type="entry name" value="DNA_mismatch_repair_MutS_C"/>
</dbReference>
<dbReference type="InterPro" id="IPR007861">
    <property type="entry name" value="DNA_mismatch_repair_MutS_clamp"/>
</dbReference>
<dbReference type="InterPro" id="IPR007696">
    <property type="entry name" value="DNA_mismatch_repair_MutS_core"/>
</dbReference>
<dbReference type="InterPro" id="IPR016151">
    <property type="entry name" value="DNA_mismatch_repair_MutS_N"/>
</dbReference>
<dbReference type="InterPro" id="IPR036187">
    <property type="entry name" value="DNA_mismatch_repair_MutS_sf"/>
</dbReference>
<dbReference type="InterPro" id="IPR007860">
    <property type="entry name" value="DNA_mmatch_repair_MutS_con_dom"/>
</dbReference>
<dbReference type="InterPro" id="IPR045076">
    <property type="entry name" value="MutS"/>
</dbReference>
<dbReference type="InterPro" id="IPR036678">
    <property type="entry name" value="MutS_con_dom_sf"/>
</dbReference>
<dbReference type="InterPro" id="IPR027417">
    <property type="entry name" value="P-loop_NTPase"/>
</dbReference>
<dbReference type="NCBIfam" id="TIGR01070">
    <property type="entry name" value="mutS1"/>
    <property type="match status" value="1"/>
</dbReference>
<dbReference type="NCBIfam" id="NF003810">
    <property type="entry name" value="PRK05399.1"/>
    <property type="match status" value="1"/>
</dbReference>
<dbReference type="PANTHER" id="PTHR11361:SF34">
    <property type="entry name" value="DNA MISMATCH REPAIR PROTEIN MSH1, MITOCHONDRIAL"/>
    <property type="match status" value="1"/>
</dbReference>
<dbReference type="PANTHER" id="PTHR11361">
    <property type="entry name" value="DNA MISMATCH REPAIR PROTEIN MUTS FAMILY MEMBER"/>
    <property type="match status" value="1"/>
</dbReference>
<dbReference type="Pfam" id="PF01624">
    <property type="entry name" value="MutS_I"/>
    <property type="match status" value="1"/>
</dbReference>
<dbReference type="Pfam" id="PF05188">
    <property type="entry name" value="MutS_II"/>
    <property type="match status" value="1"/>
</dbReference>
<dbReference type="Pfam" id="PF05192">
    <property type="entry name" value="MutS_III"/>
    <property type="match status" value="1"/>
</dbReference>
<dbReference type="Pfam" id="PF05190">
    <property type="entry name" value="MutS_IV"/>
    <property type="match status" value="1"/>
</dbReference>
<dbReference type="Pfam" id="PF00488">
    <property type="entry name" value="MutS_V"/>
    <property type="match status" value="1"/>
</dbReference>
<dbReference type="PIRSF" id="PIRSF037677">
    <property type="entry name" value="DNA_mis_repair_Msh6"/>
    <property type="match status" value="1"/>
</dbReference>
<dbReference type="SMART" id="SM00534">
    <property type="entry name" value="MUTSac"/>
    <property type="match status" value="1"/>
</dbReference>
<dbReference type="SMART" id="SM00533">
    <property type="entry name" value="MUTSd"/>
    <property type="match status" value="1"/>
</dbReference>
<dbReference type="SUPFAM" id="SSF55271">
    <property type="entry name" value="DNA repair protein MutS, domain I"/>
    <property type="match status" value="1"/>
</dbReference>
<dbReference type="SUPFAM" id="SSF53150">
    <property type="entry name" value="DNA repair protein MutS, domain II"/>
    <property type="match status" value="1"/>
</dbReference>
<dbReference type="SUPFAM" id="SSF48334">
    <property type="entry name" value="DNA repair protein MutS, domain III"/>
    <property type="match status" value="1"/>
</dbReference>
<dbReference type="SUPFAM" id="SSF52540">
    <property type="entry name" value="P-loop containing nucleoside triphosphate hydrolases"/>
    <property type="match status" value="1"/>
</dbReference>
<dbReference type="PROSITE" id="PS00486">
    <property type="entry name" value="DNA_MISMATCH_REPAIR_2"/>
    <property type="match status" value="1"/>
</dbReference>
<keyword id="KW-0067">ATP-binding</keyword>
<keyword id="KW-0227">DNA damage</keyword>
<keyword id="KW-0234">DNA repair</keyword>
<keyword id="KW-0238">DNA-binding</keyword>
<keyword id="KW-0547">Nucleotide-binding</keyword>
<evidence type="ECO:0000255" key="1">
    <source>
        <dbReference type="HAMAP-Rule" id="MF_00096"/>
    </source>
</evidence>
<evidence type="ECO:0000256" key="2">
    <source>
        <dbReference type="SAM" id="MobiDB-lite"/>
    </source>
</evidence>
<protein>
    <recommendedName>
        <fullName evidence="1">DNA mismatch repair protein MutS</fullName>
    </recommendedName>
</protein>
<organism>
    <name type="scientific">Brucella suis biovar 1 (strain 1330)</name>
    <dbReference type="NCBI Taxonomy" id="204722"/>
    <lineage>
        <taxon>Bacteria</taxon>
        <taxon>Pseudomonadati</taxon>
        <taxon>Pseudomonadota</taxon>
        <taxon>Alphaproteobacteria</taxon>
        <taxon>Hyphomicrobiales</taxon>
        <taxon>Brucellaceae</taxon>
        <taxon>Brucella/Ochrobactrum group</taxon>
        <taxon>Brucella</taxon>
    </lineage>
</organism>
<reference key="1">
    <citation type="journal article" date="2002" name="Proc. Natl. Acad. Sci. U.S.A.">
        <title>The Brucella suis genome reveals fundamental similarities between animal and plant pathogens and symbionts.</title>
        <authorList>
            <person name="Paulsen I.T."/>
            <person name="Seshadri R."/>
            <person name="Nelson K.E."/>
            <person name="Eisen J.A."/>
            <person name="Heidelberg J.F."/>
            <person name="Read T.D."/>
            <person name="Dodson R.J."/>
            <person name="Umayam L.A."/>
            <person name="Brinkac L.M."/>
            <person name="Beanan M.J."/>
            <person name="Daugherty S.C."/>
            <person name="DeBoy R.T."/>
            <person name="Durkin A.S."/>
            <person name="Kolonay J.F."/>
            <person name="Madupu R."/>
            <person name="Nelson W.C."/>
            <person name="Ayodeji B."/>
            <person name="Kraul M."/>
            <person name="Shetty J."/>
            <person name="Malek J.A."/>
            <person name="Van Aken S.E."/>
            <person name="Riedmuller S."/>
            <person name="Tettelin H."/>
            <person name="Gill S.R."/>
            <person name="White O."/>
            <person name="Salzberg S.L."/>
            <person name="Hoover D.L."/>
            <person name="Lindler L.E."/>
            <person name="Halling S.M."/>
            <person name="Boyle S.M."/>
            <person name="Fraser C.M."/>
        </authorList>
    </citation>
    <scope>NUCLEOTIDE SEQUENCE [LARGE SCALE GENOMIC DNA]</scope>
    <source>
        <strain>1330</strain>
    </source>
</reference>
<reference key="2">
    <citation type="journal article" date="2011" name="J. Bacteriol.">
        <title>Revised genome sequence of Brucella suis 1330.</title>
        <authorList>
            <person name="Tae H."/>
            <person name="Shallom S."/>
            <person name="Settlage R."/>
            <person name="Preston D."/>
            <person name="Adams L.G."/>
            <person name="Garner H.R."/>
        </authorList>
    </citation>
    <scope>NUCLEOTIDE SEQUENCE [LARGE SCALE GENOMIC DNA]</scope>
    <source>
        <strain>1330</strain>
    </source>
</reference>
<sequence length="910" mass="98836">MEAKVEEKEPEPVENAGPDAPVRLTPMMEQYIEIKAANVDSLLFYRMGDFYELFFDDAVAASAALGITLTKRGKHLGEDIPMCGVPVHAADDYLQKLIAKGYRVAVCEQVEDPAEAKKRGSKSVVKRDVIRLVTPGTLTEEKLLDPAQANFLMAMGRTRGDGALALAWIDISTGTFRVAETTPDRLFADIMRVDPRELVVADSAFHDEELRPVFDLIGKAVTPQPATLFDSAAAQTRIQHYFNVATLDGFGQFSRPELSAISGAIAYIEKTQISERPPLMRPEREHEGGTLFIDPATRASLELARTMSGNRDGSLLKAIDRTVTGGGARLLAERLTAPLTSPKEIALRLDSVSWCLSEQTLCEALRLELKGVPDMPRALSRLAVGRGGPRDLGALACGFEAAGGIASLLDGALLPDELAAAREAIEKMPAGFAAHLDRALADELPLLKRDGGFVREGYNSELDEMRALRDQSRRVIAGLQADYIEETGIKSLKIKHNNVLGYFIEVTANNSGAMTDTDEAKSRFIHRQTMANAMRFTTTELAELESKIANAADRALSIELAIFEELTAEAVAHADSIRAAASALSVFDVSTALAVLAEERGYCRPHVDDSLSFNIVAGRHPVVEQALRRQAANPFVANDCDLSPQRDGGDGAIWLLTGPNMGGKSTFLRQNALIAILAQMGSFVPAGSAHIGVVDRLFSRVGASDDLARGRSTFMVEMVETAAILNQAGEHSLVILDEIGRGTATFDGLSIAWAAVEYLHEKNRCRALFATHFHEMTALSEKLERLSNVTMRVKEWDNDVIFLHEVAKGAADRSYGVQVARLAGLPEAVVNRARDVLHQLEAGETSGKADRLIDDLPLFSVMLQQEKPKPQIQAKDSELANAVAAISPDELTPREALDLIYKLKELAGKA</sequence>
<comment type="function">
    <text evidence="1">This protein is involved in the repair of mismatches in DNA. It is possible that it carries out the mismatch recognition step. This protein has a weak ATPase activity.</text>
</comment>
<comment type="similarity">
    <text evidence="1">Belongs to the DNA mismatch repair MutS family.</text>
</comment>
<name>MUTS_BRUSU</name>
<gene>
    <name evidence="1" type="primary">mutS</name>
    <name type="ordered locus">BR0147</name>
    <name type="ordered locus">BS1330_I0147</name>
</gene>